<evidence type="ECO:0000255" key="1">
    <source>
        <dbReference type="HAMAP-Rule" id="MF_00367"/>
    </source>
</evidence>
<evidence type="ECO:0000255" key="2">
    <source>
        <dbReference type="PROSITE-ProRule" id="PRU01050"/>
    </source>
</evidence>
<evidence type="ECO:0000305" key="3"/>
<reference key="1">
    <citation type="journal article" date="2001" name="Proc. Natl. Acad. Sci. U.S.A.">
        <title>Complete genome sequence of Caulobacter crescentus.</title>
        <authorList>
            <person name="Nierman W.C."/>
            <person name="Feldblyum T.V."/>
            <person name="Laub M.T."/>
            <person name="Paulsen I.T."/>
            <person name="Nelson K.E."/>
            <person name="Eisen J.A."/>
            <person name="Heidelberg J.F."/>
            <person name="Alley M.R.K."/>
            <person name="Ohta N."/>
            <person name="Maddock J.R."/>
            <person name="Potocka I."/>
            <person name="Nelson W.C."/>
            <person name="Newton A."/>
            <person name="Stephens C."/>
            <person name="Phadke N.D."/>
            <person name="Ely B."/>
            <person name="DeBoy R.T."/>
            <person name="Dodson R.J."/>
            <person name="Durkin A.S."/>
            <person name="Gwinn M.L."/>
            <person name="Haft D.H."/>
            <person name="Kolonay J.F."/>
            <person name="Smit J."/>
            <person name="Craven M.B."/>
            <person name="Khouri H.M."/>
            <person name="Shetty J."/>
            <person name="Berry K.J."/>
            <person name="Utterback T.R."/>
            <person name="Tran K."/>
            <person name="Wolf A.M."/>
            <person name="Vamathevan J.J."/>
            <person name="Ermolaeva M.D."/>
            <person name="White O."/>
            <person name="Salzberg S.L."/>
            <person name="Venter J.C."/>
            <person name="Shapiro L."/>
            <person name="Fraser C.M."/>
        </authorList>
    </citation>
    <scope>NUCLEOTIDE SEQUENCE [LARGE SCALE GENOMIC DNA]</scope>
    <source>
        <strain>ATCC 19089 / CIP 103742 / CB 15</strain>
    </source>
</reference>
<name>ERA_CAUVC</name>
<dbReference type="EMBL" id="AE005673">
    <property type="protein sequence ID" value="AAK23541.1"/>
    <property type="status" value="ALT_INIT"/>
    <property type="molecule type" value="Genomic_DNA"/>
</dbReference>
<dbReference type="PIR" id="A87443">
    <property type="entry name" value="A87443"/>
</dbReference>
<dbReference type="RefSeq" id="NP_420373.1">
    <property type="nucleotide sequence ID" value="NC_002696.2"/>
</dbReference>
<dbReference type="RefSeq" id="WP_012640271.1">
    <property type="nucleotide sequence ID" value="NC_002696.2"/>
</dbReference>
<dbReference type="SMR" id="P58071"/>
<dbReference type="STRING" id="190650.CC_1562"/>
<dbReference type="EnsemblBacteria" id="AAK23541">
    <property type="protein sequence ID" value="AAK23541"/>
    <property type="gene ID" value="CC_1562"/>
</dbReference>
<dbReference type="KEGG" id="ccr:CC_1562"/>
<dbReference type="PATRIC" id="fig|190650.5.peg.1590"/>
<dbReference type="eggNOG" id="COG1159">
    <property type="taxonomic scope" value="Bacteria"/>
</dbReference>
<dbReference type="HOGENOM" id="CLU_038009_1_1_5"/>
<dbReference type="Proteomes" id="UP000001816">
    <property type="component" value="Chromosome"/>
</dbReference>
<dbReference type="GO" id="GO:0005829">
    <property type="term" value="C:cytosol"/>
    <property type="evidence" value="ECO:0007669"/>
    <property type="project" value="TreeGrafter"/>
</dbReference>
<dbReference type="GO" id="GO:0005886">
    <property type="term" value="C:plasma membrane"/>
    <property type="evidence" value="ECO:0007669"/>
    <property type="project" value="UniProtKB-SubCell"/>
</dbReference>
<dbReference type="GO" id="GO:0005525">
    <property type="term" value="F:GTP binding"/>
    <property type="evidence" value="ECO:0007669"/>
    <property type="project" value="UniProtKB-UniRule"/>
</dbReference>
<dbReference type="GO" id="GO:0003924">
    <property type="term" value="F:GTPase activity"/>
    <property type="evidence" value="ECO:0007669"/>
    <property type="project" value="UniProtKB-UniRule"/>
</dbReference>
<dbReference type="GO" id="GO:0043024">
    <property type="term" value="F:ribosomal small subunit binding"/>
    <property type="evidence" value="ECO:0007669"/>
    <property type="project" value="TreeGrafter"/>
</dbReference>
<dbReference type="GO" id="GO:0070181">
    <property type="term" value="F:small ribosomal subunit rRNA binding"/>
    <property type="evidence" value="ECO:0007669"/>
    <property type="project" value="UniProtKB-UniRule"/>
</dbReference>
<dbReference type="GO" id="GO:0000028">
    <property type="term" value="P:ribosomal small subunit assembly"/>
    <property type="evidence" value="ECO:0007669"/>
    <property type="project" value="TreeGrafter"/>
</dbReference>
<dbReference type="CDD" id="cd04163">
    <property type="entry name" value="Era"/>
    <property type="match status" value="1"/>
</dbReference>
<dbReference type="CDD" id="cd22534">
    <property type="entry name" value="KH-II_Era"/>
    <property type="match status" value="1"/>
</dbReference>
<dbReference type="Gene3D" id="3.30.300.20">
    <property type="match status" value="1"/>
</dbReference>
<dbReference type="Gene3D" id="3.40.50.300">
    <property type="entry name" value="P-loop containing nucleotide triphosphate hydrolases"/>
    <property type="match status" value="1"/>
</dbReference>
<dbReference type="HAMAP" id="MF_00367">
    <property type="entry name" value="GTPase_Era"/>
    <property type="match status" value="1"/>
</dbReference>
<dbReference type="InterPro" id="IPR030388">
    <property type="entry name" value="G_ERA_dom"/>
</dbReference>
<dbReference type="InterPro" id="IPR006073">
    <property type="entry name" value="GTP-bd"/>
</dbReference>
<dbReference type="InterPro" id="IPR005662">
    <property type="entry name" value="GTPase_Era-like"/>
</dbReference>
<dbReference type="InterPro" id="IPR015946">
    <property type="entry name" value="KH_dom-like_a/b"/>
</dbReference>
<dbReference type="InterPro" id="IPR004044">
    <property type="entry name" value="KH_dom_type_2"/>
</dbReference>
<dbReference type="InterPro" id="IPR009019">
    <property type="entry name" value="KH_sf_prok-type"/>
</dbReference>
<dbReference type="InterPro" id="IPR027417">
    <property type="entry name" value="P-loop_NTPase"/>
</dbReference>
<dbReference type="InterPro" id="IPR005225">
    <property type="entry name" value="Small_GTP-bd"/>
</dbReference>
<dbReference type="NCBIfam" id="TIGR00436">
    <property type="entry name" value="era"/>
    <property type="match status" value="1"/>
</dbReference>
<dbReference type="NCBIfam" id="NF000908">
    <property type="entry name" value="PRK00089.1"/>
    <property type="match status" value="1"/>
</dbReference>
<dbReference type="NCBIfam" id="TIGR00231">
    <property type="entry name" value="small_GTP"/>
    <property type="match status" value="1"/>
</dbReference>
<dbReference type="PANTHER" id="PTHR42698">
    <property type="entry name" value="GTPASE ERA"/>
    <property type="match status" value="1"/>
</dbReference>
<dbReference type="PANTHER" id="PTHR42698:SF1">
    <property type="entry name" value="GTPASE ERA, MITOCHONDRIAL"/>
    <property type="match status" value="1"/>
</dbReference>
<dbReference type="Pfam" id="PF07650">
    <property type="entry name" value="KH_2"/>
    <property type="match status" value="1"/>
</dbReference>
<dbReference type="Pfam" id="PF01926">
    <property type="entry name" value="MMR_HSR1"/>
    <property type="match status" value="1"/>
</dbReference>
<dbReference type="SUPFAM" id="SSF52540">
    <property type="entry name" value="P-loop containing nucleoside triphosphate hydrolases"/>
    <property type="match status" value="1"/>
</dbReference>
<dbReference type="SUPFAM" id="SSF54814">
    <property type="entry name" value="Prokaryotic type KH domain (KH-domain type II)"/>
    <property type="match status" value="1"/>
</dbReference>
<dbReference type="PROSITE" id="PS51713">
    <property type="entry name" value="G_ERA"/>
    <property type="match status" value="1"/>
</dbReference>
<dbReference type="PROSITE" id="PS50823">
    <property type="entry name" value="KH_TYPE_2"/>
    <property type="match status" value="1"/>
</dbReference>
<sequence length="316" mass="34710">MTDTTSKTRAGFAAIIGAPNAGKSTLVNRMVGAKVSIVTQKVQTTRFPVRGVAIEGDTQIVLVDTPGIFSPRRRLDRAMVRAAWAGSEEAEATVHLVDVQAELASRADKATPGEYRSAQDVQTIIEGLKAADRKVILALNKIDGIKRDTLLAVAKDFFDTGVYSDVFMISASTGAGVEDLTAKLVSMMPEGPWLYPEDQTADLPARLLAAEITREKVYLRVHEELPYAATVETTAFEERKDGSVRIEQTILVEREGQRVIVIGKGGQTLKWIGQASREELCDILDRKVHLFLHVKVKENWAEERGLFSDIGLDFDV</sequence>
<feature type="chain" id="PRO_0000180006" description="GTPase Era">
    <location>
        <begin position="1"/>
        <end position="316"/>
    </location>
</feature>
<feature type="domain" description="Era-type G" evidence="2">
    <location>
        <begin position="9"/>
        <end position="190"/>
    </location>
</feature>
<feature type="domain" description="KH type-2" evidence="1">
    <location>
        <begin position="221"/>
        <end position="298"/>
    </location>
</feature>
<feature type="region of interest" description="G1" evidence="2">
    <location>
        <begin position="17"/>
        <end position="24"/>
    </location>
</feature>
<feature type="region of interest" description="G2" evidence="2">
    <location>
        <begin position="43"/>
        <end position="47"/>
    </location>
</feature>
<feature type="region of interest" description="G3" evidence="2">
    <location>
        <begin position="64"/>
        <end position="67"/>
    </location>
</feature>
<feature type="region of interest" description="G4" evidence="2">
    <location>
        <begin position="140"/>
        <end position="143"/>
    </location>
</feature>
<feature type="region of interest" description="G5" evidence="2">
    <location>
        <begin position="169"/>
        <end position="171"/>
    </location>
</feature>
<feature type="binding site" evidence="1">
    <location>
        <begin position="17"/>
        <end position="24"/>
    </location>
    <ligand>
        <name>GTP</name>
        <dbReference type="ChEBI" id="CHEBI:37565"/>
    </ligand>
</feature>
<feature type="binding site" evidence="1">
    <location>
        <begin position="64"/>
        <end position="68"/>
    </location>
    <ligand>
        <name>GTP</name>
        <dbReference type="ChEBI" id="CHEBI:37565"/>
    </ligand>
</feature>
<feature type="binding site" evidence="1">
    <location>
        <begin position="140"/>
        <end position="143"/>
    </location>
    <ligand>
        <name>GTP</name>
        <dbReference type="ChEBI" id="CHEBI:37565"/>
    </ligand>
</feature>
<proteinExistence type="inferred from homology"/>
<keyword id="KW-0997">Cell inner membrane</keyword>
<keyword id="KW-1003">Cell membrane</keyword>
<keyword id="KW-0963">Cytoplasm</keyword>
<keyword id="KW-0342">GTP-binding</keyword>
<keyword id="KW-0472">Membrane</keyword>
<keyword id="KW-0547">Nucleotide-binding</keyword>
<keyword id="KW-1185">Reference proteome</keyword>
<keyword id="KW-0690">Ribosome biogenesis</keyword>
<keyword id="KW-0694">RNA-binding</keyword>
<keyword id="KW-0699">rRNA-binding</keyword>
<protein>
    <recommendedName>
        <fullName evidence="1">GTPase Era</fullName>
    </recommendedName>
</protein>
<comment type="function">
    <text evidence="1">An essential GTPase that binds both GDP and GTP, with rapid nucleotide exchange. Plays a role in 16S rRNA processing and 30S ribosomal subunit biogenesis and possibly also in cell cycle regulation and energy metabolism.</text>
</comment>
<comment type="subunit">
    <text evidence="1">Monomer.</text>
</comment>
<comment type="subcellular location">
    <subcellularLocation>
        <location>Cytoplasm</location>
    </subcellularLocation>
    <subcellularLocation>
        <location evidence="1">Cell inner membrane</location>
        <topology evidence="1">Peripheral membrane protein</topology>
    </subcellularLocation>
</comment>
<comment type="similarity">
    <text evidence="1 2">Belongs to the TRAFAC class TrmE-Era-EngA-EngB-Septin-like GTPase superfamily. Era GTPase family.</text>
</comment>
<comment type="sequence caution" evidence="3">
    <conflict type="erroneous initiation">
        <sequence resource="EMBL-CDS" id="AAK23541"/>
    </conflict>
    <text>Extended N-terminus.</text>
</comment>
<accession>P58071</accession>
<organism>
    <name type="scientific">Caulobacter vibrioides (strain ATCC 19089 / CIP 103742 / CB 15)</name>
    <name type="common">Caulobacter crescentus</name>
    <dbReference type="NCBI Taxonomy" id="190650"/>
    <lineage>
        <taxon>Bacteria</taxon>
        <taxon>Pseudomonadati</taxon>
        <taxon>Pseudomonadota</taxon>
        <taxon>Alphaproteobacteria</taxon>
        <taxon>Caulobacterales</taxon>
        <taxon>Caulobacteraceae</taxon>
        <taxon>Caulobacter</taxon>
    </lineage>
</organism>
<gene>
    <name evidence="1" type="primary">era</name>
    <name type="ordered locus">CC_1562</name>
</gene>